<feature type="chain" id="PRO_0000111277" description="Small ribosomal subunit protein bS18c">
    <location>
        <begin position="1"/>
        <end position="101"/>
    </location>
</feature>
<proteinExistence type="inferred from homology"/>
<sequence length="101" mass="12052">MDKSKRPFLKFKRSFRRRLPPIQSGDRIDYRNMSLISRFISEQGKILSRRVNRLTLKQQRLITLAIKQARILSLLPFLNNEKQFERTESTARTTGFKARNK</sequence>
<keyword id="KW-0150">Chloroplast</keyword>
<keyword id="KW-0934">Plastid</keyword>
<keyword id="KW-0687">Ribonucleoprotein</keyword>
<keyword id="KW-0689">Ribosomal protein</keyword>
<keyword id="KW-0694">RNA-binding</keyword>
<keyword id="KW-0699">rRNA-binding</keyword>
<gene>
    <name type="primary">rps18</name>
</gene>
<geneLocation type="chloroplast"/>
<accession>P69659</accession>
<accession>P06376</accession>
<accession>P58820</accession>
<dbReference type="EMBL" id="AJ316582">
    <property type="protein sequence ID" value="CAC88066.1"/>
    <property type="molecule type" value="Genomic_DNA"/>
</dbReference>
<dbReference type="RefSeq" id="NP_783254.1">
    <property type="nucleotide sequence ID" value="NC_004561.1"/>
</dbReference>
<dbReference type="SMR" id="P69659"/>
<dbReference type="GeneID" id="806515"/>
<dbReference type="GO" id="GO:0009507">
    <property type="term" value="C:chloroplast"/>
    <property type="evidence" value="ECO:0007669"/>
    <property type="project" value="UniProtKB-SubCell"/>
</dbReference>
<dbReference type="GO" id="GO:0005763">
    <property type="term" value="C:mitochondrial small ribosomal subunit"/>
    <property type="evidence" value="ECO:0007669"/>
    <property type="project" value="TreeGrafter"/>
</dbReference>
<dbReference type="GO" id="GO:0070181">
    <property type="term" value="F:small ribosomal subunit rRNA binding"/>
    <property type="evidence" value="ECO:0007669"/>
    <property type="project" value="TreeGrafter"/>
</dbReference>
<dbReference type="GO" id="GO:0003735">
    <property type="term" value="F:structural constituent of ribosome"/>
    <property type="evidence" value="ECO:0007669"/>
    <property type="project" value="InterPro"/>
</dbReference>
<dbReference type="GO" id="GO:0006412">
    <property type="term" value="P:translation"/>
    <property type="evidence" value="ECO:0007669"/>
    <property type="project" value="UniProtKB-UniRule"/>
</dbReference>
<dbReference type="FunFam" id="4.10.640.10:FF:000002">
    <property type="entry name" value="30S ribosomal protein S18, chloroplastic"/>
    <property type="match status" value="1"/>
</dbReference>
<dbReference type="Gene3D" id="4.10.640.10">
    <property type="entry name" value="Ribosomal protein S18"/>
    <property type="match status" value="1"/>
</dbReference>
<dbReference type="HAMAP" id="MF_00270">
    <property type="entry name" value="Ribosomal_bS18"/>
    <property type="match status" value="1"/>
</dbReference>
<dbReference type="InterPro" id="IPR001648">
    <property type="entry name" value="Ribosomal_bS18"/>
</dbReference>
<dbReference type="InterPro" id="IPR018275">
    <property type="entry name" value="Ribosomal_bS18_CS"/>
</dbReference>
<dbReference type="InterPro" id="IPR036870">
    <property type="entry name" value="Ribosomal_bS18_sf"/>
</dbReference>
<dbReference type="NCBIfam" id="TIGR00165">
    <property type="entry name" value="S18"/>
    <property type="match status" value="1"/>
</dbReference>
<dbReference type="PANTHER" id="PTHR13479">
    <property type="entry name" value="30S RIBOSOMAL PROTEIN S18"/>
    <property type="match status" value="1"/>
</dbReference>
<dbReference type="PANTHER" id="PTHR13479:SF40">
    <property type="entry name" value="SMALL RIBOSOMAL SUBUNIT PROTEIN BS18M"/>
    <property type="match status" value="1"/>
</dbReference>
<dbReference type="Pfam" id="PF01084">
    <property type="entry name" value="Ribosomal_S18"/>
    <property type="match status" value="1"/>
</dbReference>
<dbReference type="PRINTS" id="PR00974">
    <property type="entry name" value="RIBOSOMALS18"/>
</dbReference>
<dbReference type="SUPFAM" id="SSF46911">
    <property type="entry name" value="Ribosomal protein S18"/>
    <property type="match status" value="1"/>
</dbReference>
<dbReference type="PROSITE" id="PS00057">
    <property type="entry name" value="RIBOSOMAL_S18"/>
    <property type="match status" value="1"/>
</dbReference>
<protein>
    <recommendedName>
        <fullName evidence="1">Small ribosomal subunit protein bS18c</fullName>
    </recommendedName>
    <alternativeName>
        <fullName>30S ribosomal protein S18, chloroplastic</fullName>
    </alternativeName>
</protein>
<comment type="subunit">
    <text>Part of the 30S ribosomal subunit.</text>
</comment>
<comment type="subcellular location">
    <subcellularLocation>
        <location>Plastid</location>
        <location>Chloroplast</location>
    </subcellularLocation>
</comment>
<comment type="similarity">
    <text evidence="1">Belongs to the bacterial ribosomal protein bS18 family.</text>
</comment>
<organism>
    <name type="scientific">Atropa belladonna</name>
    <name type="common">Belladonna</name>
    <name type="synonym">Deadly nightshade</name>
    <dbReference type="NCBI Taxonomy" id="33113"/>
    <lineage>
        <taxon>Eukaryota</taxon>
        <taxon>Viridiplantae</taxon>
        <taxon>Streptophyta</taxon>
        <taxon>Embryophyta</taxon>
        <taxon>Tracheophyta</taxon>
        <taxon>Spermatophyta</taxon>
        <taxon>Magnoliopsida</taxon>
        <taxon>eudicotyledons</taxon>
        <taxon>Gunneridae</taxon>
        <taxon>Pentapetalae</taxon>
        <taxon>asterids</taxon>
        <taxon>lamiids</taxon>
        <taxon>Solanales</taxon>
        <taxon>Solanaceae</taxon>
        <taxon>Solanoideae</taxon>
        <taxon>Hyoscyameae</taxon>
        <taxon>Atropa</taxon>
    </lineage>
</organism>
<name>RR18_ATRBE</name>
<evidence type="ECO:0000305" key="1"/>
<reference key="1">
    <citation type="journal article" date="2002" name="Mol. Biol. Evol.">
        <title>The plastid chromosome of Atropa belladonna and its comparison with that of Nicotiana tabacum: the role of RNA editing in generating divergence in the process of plant speciation.</title>
        <authorList>
            <person name="Schmitz-Linneweber C."/>
            <person name="Regel R."/>
            <person name="Du T.G."/>
            <person name="Hupfer H."/>
            <person name="Herrmann R.G."/>
            <person name="Maier R.M."/>
        </authorList>
    </citation>
    <scope>NUCLEOTIDE SEQUENCE [LARGE SCALE GENOMIC DNA]</scope>
    <source>
        <strain>cv. Ab5p(kan)</strain>
    </source>
</reference>